<comment type="function">
    <text evidence="1">RNA chaperone with significant RNA binding, RNA strand exchange and RNA duplexing activities.</text>
</comment>
<comment type="subcellular location">
    <subcellularLocation>
        <location evidence="1">Cytoplasm</location>
    </subcellularLocation>
</comment>
<comment type="similarity">
    <text evidence="1">Belongs to the ProQ family.</text>
</comment>
<protein>
    <recommendedName>
        <fullName evidence="1">RNA chaperone ProQ</fullName>
    </recommendedName>
</protein>
<name>PROQ_AERS4</name>
<evidence type="ECO:0000255" key="1">
    <source>
        <dbReference type="HAMAP-Rule" id="MF_00749"/>
    </source>
</evidence>
<evidence type="ECO:0000256" key="2">
    <source>
        <dbReference type="SAM" id="MobiDB-lite"/>
    </source>
</evidence>
<gene>
    <name evidence="1" type="primary">proQ</name>
    <name type="ordered locus">ASA_1988</name>
</gene>
<reference key="1">
    <citation type="journal article" date="2008" name="BMC Genomics">
        <title>The genome of Aeromonas salmonicida subsp. salmonicida A449: insights into the evolution of a fish pathogen.</title>
        <authorList>
            <person name="Reith M.E."/>
            <person name="Singh R.K."/>
            <person name="Curtis B."/>
            <person name="Boyd J.M."/>
            <person name="Bouevitch A."/>
            <person name="Kimball J."/>
            <person name="Munholland J."/>
            <person name="Murphy C."/>
            <person name="Sarty D."/>
            <person name="Williams J."/>
            <person name="Nash J.H."/>
            <person name="Johnson S.C."/>
            <person name="Brown L.L."/>
        </authorList>
    </citation>
    <scope>NUCLEOTIDE SEQUENCE [LARGE SCALE GENOMIC DNA]</scope>
    <source>
        <strain>A449</strain>
    </source>
</reference>
<dbReference type="EMBL" id="CP000644">
    <property type="protein sequence ID" value="ABO90059.1"/>
    <property type="molecule type" value="Genomic_DNA"/>
</dbReference>
<dbReference type="RefSeq" id="WP_005315631.1">
    <property type="nucleotide sequence ID" value="NC_009348.1"/>
</dbReference>
<dbReference type="SMR" id="A4SMD7"/>
<dbReference type="STRING" id="29491.GCA_000820065_03872"/>
<dbReference type="KEGG" id="asa:ASA_1988"/>
<dbReference type="PATRIC" id="fig|382245.13.peg.1973"/>
<dbReference type="eggNOG" id="COG3109">
    <property type="taxonomic scope" value="Bacteria"/>
</dbReference>
<dbReference type="HOGENOM" id="CLU_113254_0_0_6"/>
<dbReference type="Proteomes" id="UP000000225">
    <property type="component" value="Chromosome"/>
</dbReference>
<dbReference type="GO" id="GO:0005829">
    <property type="term" value="C:cytosol"/>
    <property type="evidence" value="ECO:0007669"/>
    <property type="project" value="TreeGrafter"/>
</dbReference>
<dbReference type="GO" id="GO:0033592">
    <property type="term" value="F:RNA strand annealing activity"/>
    <property type="evidence" value="ECO:0007669"/>
    <property type="project" value="UniProtKB-UniRule"/>
</dbReference>
<dbReference type="GO" id="GO:0034057">
    <property type="term" value="F:RNA strand-exchange activity"/>
    <property type="evidence" value="ECO:0007669"/>
    <property type="project" value="UniProtKB-UniRule"/>
</dbReference>
<dbReference type="GO" id="GO:0010608">
    <property type="term" value="P:post-transcriptional regulation of gene expression"/>
    <property type="evidence" value="ECO:0007669"/>
    <property type="project" value="InterPro"/>
</dbReference>
<dbReference type="FunFam" id="1.10.1710.10:FF:000001">
    <property type="entry name" value="RNA chaperone ProQ"/>
    <property type="match status" value="1"/>
</dbReference>
<dbReference type="Gene3D" id="1.10.1710.10">
    <property type="entry name" value="ProQ/FinO domain"/>
    <property type="match status" value="1"/>
</dbReference>
<dbReference type="HAMAP" id="MF_00749">
    <property type="entry name" value="ProQ"/>
    <property type="match status" value="1"/>
</dbReference>
<dbReference type="InterPro" id="IPR023529">
    <property type="entry name" value="ProQ"/>
</dbReference>
<dbReference type="InterPro" id="IPR016103">
    <property type="entry name" value="ProQ/FinO"/>
</dbReference>
<dbReference type="InterPro" id="IPR036442">
    <property type="entry name" value="ProQ/FinO_sf"/>
</dbReference>
<dbReference type="InterPro" id="IPR035236">
    <property type="entry name" value="ProQ_C"/>
</dbReference>
<dbReference type="NCBIfam" id="NF003434">
    <property type="entry name" value="PRK04950.1"/>
    <property type="match status" value="1"/>
</dbReference>
<dbReference type="PANTHER" id="PTHR38106">
    <property type="entry name" value="RNA CHAPERONE PROQ"/>
    <property type="match status" value="1"/>
</dbReference>
<dbReference type="PANTHER" id="PTHR38106:SF1">
    <property type="entry name" value="RNA CHAPERONE PROQ"/>
    <property type="match status" value="1"/>
</dbReference>
<dbReference type="Pfam" id="PF04352">
    <property type="entry name" value="ProQ"/>
    <property type="match status" value="1"/>
</dbReference>
<dbReference type="Pfam" id="PF17516">
    <property type="entry name" value="ProQ_C"/>
    <property type="match status" value="1"/>
</dbReference>
<dbReference type="SMART" id="SM00945">
    <property type="entry name" value="ProQ"/>
    <property type="match status" value="1"/>
</dbReference>
<dbReference type="SUPFAM" id="SSF48657">
    <property type="entry name" value="FinO-like"/>
    <property type="match status" value="1"/>
</dbReference>
<organism>
    <name type="scientific">Aeromonas salmonicida (strain A449)</name>
    <dbReference type="NCBI Taxonomy" id="382245"/>
    <lineage>
        <taxon>Bacteria</taxon>
        <taxon>Pseudomonadati</taxon>
        <taxon>Pseudomonadota</taxon>
        <taxon>Gammaproteobacteria</taxon>
        <taxon>Aeromonadales</taxon>
        <taxon>Aeromonadaceae</taxon>
        <taxon>Aeromonas</taxon>
    </lineage>
</organism>
<sequence length="210" mass="23302">MENTEKLKNSKEIVAYLVEKFPACFIAEGEAKPLKIGIFQDLAERLADDARVSKTMLRSALRQYTSSWRYLHGLKAGQARVDLDGNPGELLTEEHIEHAKQALKESKERVFASRRTNNKEEKAKQPRRPAPRKADAAAKSDKPKAAPKAVVADAPLVKVDAANLKVDQGVRVVLGKSPVPATIKEVTKDDVQVQLQTGMMLQVKFEHLVL</sequence>
<keyword id="KW-0143">Chaperone</keyword>
<keyword id="KW-0963">Cytoplasm</keyword>
<keyword id="KW-0694">RNA-binding</keyword>
<accession>A4SMD7</accession>
<feature type="chain" id="PRO_0000303086" description="RNA chaperone ProQ">
    <location>
        <begin position="1"/>
        <end position="210"/>
    </location>
</feature>
<feature type="region of interest" description="Disordered" evidence="2">
    <location>
        <begin position="103"/>
        <end position="148"/>
    </location>
</feature>
<feature type="compositionally biased region" description="Basic and acidic residues" evidence="2">
    <location>
        <begin position="103"/>
        <end position="124"/>
    </location>
</feature>
<feature type="compositionally biased region" description="Basic and acidic residues" evidence="2">
    <location>
        <begin position="132"/>
        <end position="144"/>
    </location>
</feature>
<proteinExistence type="inferred from homology"/>